<protein>
    <recommendedName>
        <fullName>Transcription factor BYE1</fullName>
    </recommendedName>
</protein>
<gene>
    <name type="primary">BYE1</name>
    <name type="ordered locus">DEHA2E17996g</name>
</gene>
<organism>
    <name type="scientific">Debaryomyces hansenii (strain ATCC 36239 / CBS 767 / BCRC 21394 / JCM 1990 / NBRC 0083 / IGC 2968)</name>
    <name type="common">Yeast</name>
    <name type="synonym">Torulaspora hansenii</name>
    <dbReference type="NCBI Taxonomy" id="284592"/>
    <lineage>
        <taxon>Eukaryota</taxon>
        <taxon>Fungi</taxon>
        <taxon>Dikarya</taxon>
        <taxon>Ascomycota</taxon>
        <taxon>Saccharomycotina</taxon>
        <taxon>Pichiomycetes</taxon>
        <taxon>Debaryomycetaceae</taxon>
        <taxon>Debaryomyces</taxon>
    </lineage>
</organism>
<reference key="1">
    <citation type="journal article" date="2004" name="Nature">
        <title>Genome evolution in yeasts.</title>
        <authorList>
            <person name="Dujon B."/>
            <person name="Sherman D."/>
            <person name="Fischer G."/>
            <person name="Durrens P."/>
            <person name="Casaregola S."/>
            <person name="Lafontaine I."/>
            <person name="de Montigny J."/>
            <person name="Marck C."/>
            <person name="Neuveglise C."/>
            <person name="Talla E."/>
            <person name="Goffard N."/>
            <person name="Frangeul L."/>
            <person name="Aigle M."/>
            <person name="Anthouard V."/>
            <person name="Babour A."/>
            <person name="Barbe V."/>
            <person name="Barnay S."/>
            <person name="Blanchin S."/>
            <person name="Beckerich J.-M."/>
            <person name="Beyne E."/>
            <person name="Bleykasten C."/>
            <person name="Boisrame A."/>
            <person name="Boyer J."/>
            <person name="Cattolico L."/>
            <person name="Confanioleri F."/>
            <person name="de Daruvar A."/>
            <person name="Despons L."/>
            <person name="Fabre E."/>
            <person name="Fairhead C."/>
            <person name="Ferry-Dumazet H."/>
            <person name="Groppi A."/>
            <person name="Hantraye F."/>
            <person name="Hennequin C."/>
            <person name="Jauniaux N."/>
            <person name="Joyet P."/>
            <person name="Kachouri R."/>
            <person name="Kerrest A."/>
            <person name="Koszul R."/>
            <person name="Lemaire M."/>
            <person name="Lesur I."/>
            <person name="Ma L."/>
            <person name="Muller H."/>
            <person name="Nicaud J.-M."/>
            <person name="Nikolski M."/>
            <person name="Oztas S."/>
            <person name="Ozier-Kalogeropoulos O."/>
            <person name="Pellenz S."/>
            <person name="Potier S."/>
            <person name="Richard G.-F."/>
            <person name="Straub M.-L."/>
            <person name="Suleau A."/>
            <person name="Swennen D."/>
            <person name="Tekaia F."/>
            <person name="Wesolowski-Louvel M."/>
            <person name="Westhof E."/>
            <person name="Wirth B."/>
            <person name="Zeniou-Meyer M."/>
            <person name="Zivanovic Y."/>
            <person name="Bolotin-Fukuhara M."/>
            <person name="Thierry A."/>
            <person name="Bouchier C."/>
            <person name="Caudron B."/>
            <person name="Scarpelli C."/>
            <person name="Gaillardin C."/>
            <person name="Weissenbach J."/>
            <person name="Wincker P."/>
            <person name="Souciet J.-L."/>
        </authorList>
    </citation>
    <scope>NUCLEOTIDE SEQUENCE [LARGE SCALE GENOMIC DNA]</scope>
    <source>
        <strain>ATCC 36239 / CBS 767 / BCRC 21394 / JCM 1990 / NBRC 0083 / IGC 2968</strain>
    </source>
</reference>
<sequence>MSTRRSSRANKGQHSKREIDFYVDEEDLPSERKRSLSNSSQDNKRPHLDQDEDDGDYKENGEEKKDDDIEEEGEVRCTPCGTTSENYDEDSDQGGTMIECESCKTWQHAKCMGYRTSKTIPKHYRCNVCSGLNGDKLEKTNVDSSAISEKLKDKTRASVAKAFVNVFKRNIPESYKSPEGMDNEKLSSKWAIELEREIFIWCPKKDKKYTDKSRSLMVLIKKPNVMTRLIDGELSFTKLVNSPPEEIDSELKEYAERVRSESIRRSVLTVDANQGQRIRRTHKGEEIVEDASNQQEDVDISIMTRNIDHRRFEDEEPARGIIVNDNSKPAYNNYMEDEDDDEVGEEEAEEKQKQGSDKEGSTSDDKEGLPSSDIDDVPDLDDDELDFIIKGKKETKEETRKPSSIKLPPIFSSKIWSGRITFPDFASFGATGEFYTCSNYKNPTNPQEVKLHNRYVNISKEILSKDHYEVEGRLDRTRADAYLDKIITTRDLILVEIKCTENRSGYDKLYRYLLERNKVGVLSGRPAFVKDAYLLGIDGNDFNLPEYLKALHKMVGKVGLFALYIVKKDYVPTGPSILKKSTPNPTDYNSHSSNASSKEKTPLLDSILYKLGGNGTKKENIQIQTPQYNPPVAQNGLPTSLTTDQLSYLSGLVQQNPQVQQNPQALIQLLQQQKNTDYSPYH</sequence>
<dbReference type="EMBL" id="CR382137">
    <property type="protein sequence ID" value="CAG88347.2"/>
    <property type="molecule type" value="Genomic_DNA"/>
</dbReference>
<dbReference type="RefSeq" id="XP_460085.2">
    <property type="nucleotide sequence ID" value="XM_460085.1"/>
</dbReference>
<dbReference type="SMR" id="Q6BNY5"/>
<dbReference type="STRING" id="284592.Q6BNY5"/>
<dbReference type="GeneID" id="2902502"/>
<dbReference type="KEGG" id="dha:DEHA2E17996g"/>
<dbReference type="VEuPathDB" id="FungiDB:DEHA2E17996g"/>
<dbReference type="eggNOG" id="KOG1634">
    <property type="taxonomic scope" value="Eukaryota"/>
</dbReference>
<dbReference type="HOGENOM" id="CLU_370099_0_0_1"/>
<dbReference type="InParanoid" id="Q6BNY5"/>
<dbReference type="OMA" id="RTHKGDI"/>
<dbReference type="OrthoDB" id="79252at2759"/>
<dbReference type="Proteomes" id="UP000000599">
    <property type="component" value="Chromosome E"/>
</dbReference>
<dbReference type="GO" id="GO:0005634">
    <property type="term" value="C:nucleus"/>
    <property type="evidence" value="ECO:0007669"/>
    <property type="project" value="UniProtKB-SubCell"/>
</dbReference>
<dbReference type="GO" id="GO:0001139">
    <property type="term" value="F:RNA polymerase II complex recruiting activity"/>
    <property type="evidence" value="ECO:0007669"/>
    <property type="project" value="TreeGrafter"/>
</dbReference>
<dbReference type="GO" id="GO:0000977">
    <property type="term" value="F:RNA polymerase II transcription regulatory region sequence-specific DNA binding"/>
    <property type="evidence" value="ECO:0007669"/>
    <property type="project" value="TreeGrafter"/>
</dbReference>
<dbReference type="GO" id="GO:0008270">
    <property type="term" value="F:zinc ion binding"/>
    <property type="evidence" value="ECO:0007669"/>
    <property type="project" value="UniProtKB-KW"/>
</dbReference>
<dbReference type="GO" id="GO:0031440">
    <property type="term" value="P:regulation of mRNA 3'-end processing"/>
    <property type="evidence" value="ECO:0007669"/>
    <property type="project" value="TreeGrafter"/>
</dbReference>
<dbReference type="GO" id="GO:0031564">
    <property type="term" value="P:transcription antitermination"/>
    <property type="evidence" value="ECO:0007669"/>
    <property type="project" value="TreeGrafter"/>
</dbReference>
<dbReference type="GO" id="GO:0006362">
    <property type="term" value="P:transcription elongation by RNA polymerase I"/>
    <property type="evidence" value="ECO:0007669"/>
    <property type="project" value="TreeGrafter"/>
</dbReference>
<dbReference type="GO" id="GO:0006368">
    <property type="term" value="P:transcription elongation by RNA polymerase II"/>
    <property type="evidence" value="ECO:0007669"/>
    <property type="project" value="TreeGrafter"/>
</dbReference>
<dbReference type="Gene3D" id="1.10.472.30">
    <property type="entry name" value="Transcription elongation factor S-II, central domain"/>
    <property type="match status" value="1"/>
</dbReference>
<dbReference type="Gene3D" id="3.30.40.10">
    <property type="entry name" value="Zinc/RING finger domain, C3HC4 (zinc finger)"/>
    <property type="match status" value="1"/>
</dbReference>
<dbReference type="InterPro" id="IPR012921">
    <property type="entry name" value="SPOC_C"/>
</dbReference>
<dbReference type="InterPro" id="IPR003618">
    <property type="entry name" value="TFIIS_cen_dom"/>
</dbReference>
<dbReference type="InterPro" id="IPR036575">
    <property type="entry name" value="TFIIS_cen_dom_sf"/>
</dbReference>
<dbReference type="InterPro" id="IPR019786">
    <property type="entry name" value="Zinc_finger_PHD-type_CS"/>
</dbReference>
<dbReference type="InterPro" id="IPR011011">
    <property type="entry name" value="Znf_FYVE_PHD"/>
</dbReference>
<dbReference type="InterPro" id="IPR001965">
    <property type="entry name" value="Znf_PHD"/>
</dbReference>
<dbReference type="InterPro" id="IPR019787">
    <property type="entry name" value="Znf_PHD-finger"/>
</dbReference>
<dbReference type="InterPro" id="IPR013083">
    <property type="entry name" value="Znf_RING/FYVE/PHD"/>
</dbReference>
<dbReference type="PANTHER" id="PTHR11477:SF11">
    <property type="entry name" value="TRANSCRIPTION FACTOR BYE1"/>
    <property type="match status" value="1"/>
</dbReference>
<dbReference type="PANTHER" id="PTHR11477">
    <property type="entry name" value="TRANSCRIPTION FACTOR S-II ZINC FINGER DOMAIN-CONTAINING PROTEIN"/>
    <property type="match status" value="1"/>
</dbReference>
<dbReference type="Pfam" id="PF20826">
    <property type="entry name" value="PHD_5"/>
    <property type="match status" value="1"/>
</dbReference>
<dbReference type="Pfam" id="PF07744">
    <property type="entry name" value="SPOC"/>
    <property type="match status" value="1"/>
</dbReference>
<dbReference type="Pfam" id="PF07500">
    <property type="entry name" value="TFIIS_M"/>
    <property type="match status" value="1"/>
</dbReference>
<dbReference type="SMART" id="SM00249">
    <property type="entry name" value="PHD"/>
    <property type="match status" value="1"/>
</dbReference>
<dbReference type="SMART" id="SM00510">
    <property type="entry name" value="TFS2M"/>
    <property type="match status" value="1"/>
</dbReference>
<dbReference type="SUPFAM" id="SSF46942">
    <property type="entry name" value="Elongation factor TFIIS domain 2"/>
    <property type="match status" value="1"/>
</dbReference>
<dbReference type="SUPFAM" id="SSF57903">
    <property type="entry name" value="FYVE/PHD zinc finger"/>
    <property type="match status" value="1"/>
</dbReference>
<dbReference type="PROSITE" id="PS51321">
    <property type="entry name" value="TFIIS_CENTRAL"/>
    <property type="match status" value="1"/>
</dbReference>
<dbReference type="PROSITE" id="PS01359">
    <property type="entry name" value="ZF_PHD_1"/>
    <property type="match status" value="1"/>
</dbReference>
<dbReference type="PROSITE" id="PS50016">
    <property type="entry name" value="ZF_PHD_2"/>
    <property type="match status" value="1"/>
</dbReference>
<accession>Q6BNY5</accession>
<name>BYE1_DEBHA</name>
<keyword id="KW-0479">Metal-binding</keyword>
<keyword id="KW-0539">Nucleus</keyword>
<keyword id="KW-1185">Reference proteome</keyword>
<keyword id="KW-0678">Repressor</keyword>
<keyword id="KW-0804">Transcription</keyword>
<keyword id="KW-0805">Transcription regulation</keyword>
<keyword id="KW-0862">Zinc</keyword>
<keyword id="KW-0863">Zinc-finger</keyword>
<evidence type="ECO:0000250" key="1"/>
<evidence type="ECO:0000255" key="2">
    <source>
        <dbReference type="PROSITE-ProRule" id="PRU00146"/>
    </source>
</evidence>
<evidence type="ECO:0000255" key="3">
    <source>
        <dbReference type="PROSITE-ProRule" id="PRU00651"/>
    </source>
</evidence>
<evidence type="ECO:0000256" key="4">
    <source>
        <dbReference type="SAM" id="MobiDB-lite"/>
    </source>
</evidence>
<evidence type="ECO:0000305" key="5"/>
<comment type="function">
    <text evidence="1">Negative regulator of transcription elongation.</text>
</comment>
<comment type="subcellular location">
    <subcellularLocation>
        <location evidence="3">Nucleus</location>
    </subcellularLocation>
</comment>
<comment type="similarity">
    <text evidence="5">Belongs to the BYE1 family.</text>
</comment>
<proteinExistence type="inferred from homology"/>
<feature type="chain" id="PRO_0000324849" description="Transcription factor BYE1">
    <location>
        <begin position="1"/>
        <end position="682"/>
    </location>
</feature>
<feature type="domain" description="TFIIS central" evidence="3">
    <location>
        <begin position="155"/>
        <end position="275"/>
    </location>
</feature>
<feature type="zinc finger region" description="PHD-type" evidence="2">
    <location>
        <begin position="74"/>
        <end position="132"/>
    </location>
</feature>
<feature type="region of interest" description="Disordered" evidence="4">
    <location>
        <begin position="1"/>
        <end position="93"/>
    </location>
</feature>
<feature type="region of interest" description="Disordered" evidence="4">
    <location>
        <begin position="309"/>
        <end position="381"/>
    </location>
</feature>
<feature type="region of interest" description="Disordered" evidence="4">
    <location>
        <begin position="576"/>
        <end position="599"/>
    </location>
</feature>
<feature type="compositionally biased region" description="Basic residues" evidence="4">
    <location>
        <begin position="1"/>
        <end position="14"/>
    </location>
</feature>
<feature type="compositionally biased region" description="Basic and acidic residues" evidence="4">
    <location>
        <begin position="57"/>
        <end position="67"/>
    </location>
</feature>
<feature type="compositionally biased region" description="Acidic residues" evidence="4">
    <location>
        <begin position="335"/>
        <end position="349"/>
    </location>
</feature>
<feature type="compositionally biased region" description="Basic and acidic residues" evidence="4">
    <location>
        <begin position="350"/>
        <end position="368"/>
    </location>
</feature>
<feature type="compositionally biased region" description="Polar residues" evidence="4">
    <location>
        <begin position="579"/>
        <end position="596"/>
    </location>
</feature>